<gene>
    <name evidence="11 15" type="primary">Ganab</name>
    <name type="synonym">G2an</name>
    <name type="synonym">Kiaa0088</name>
</gene>
<dbReference type="EC" id="3.2.1.207" evidence="6"/>
<dbReference type="EMBL" id="U92793">
    <property type="protein sequence ID" value="AAC53182.1"/>
    <property type="molecule type" value="mRNA"/>
</dbReference>
<dbReference type="EMBL" id="AK017873">
    <property type="protein sequence ID" value="BAB30982.1"/>
    <property type="molecule type" value="mRNA"/>
</dbReference>
<dbReference type="EMBL" id="AK030722">
    <property type="protein sequence ID" value="BAC27099.1"/>
    <property type="molecule type" value="mRNA"/>
</dbReference>
<dbReference type="EMBL" id="AK081915">
    <property type="protein sequence ID" value="BAC38370.1"/>
    <property type="molecule type" value="mRNA"/>
</dbReference>
<dbReference type="EMBL" id="AK122201">
    <property type="protein sequence ID" value="BAC65483.1"/>
    <property type="status" value="ALT_INIT"/>
    <property type="molecule type" value="mRNA"/>
</dbReference>
<dbReference type="EMBL" id="BC094437">
    <property type="protein sequence ID" value="AAH94437.1"/>
    <property type="molecule type" value="mRNA"/>
</dbReference>
<dbReference type="EMBL" id="BC117888">
    <property type="protein sequence ID" value="AAI17889.1"/>
    <property type="molecule type" value="mRNA"/>
</dbReference>
<dbReference type="EMBL" id="BC117889">
    <property type="protein sequence ID" value="AAI17890.1"/>
    <property type="molecule type" value="mRNA"/>
</dbReference>
<dbReference type="CCDS" id="CCDS29557.1">
    <molecule id="Q8BHN3-2"/>
</dbReference>
<dbReference type="CCDS" id="CCDS89335.1">
    <molecule id="Q8BHN3-1"/>
</dbReference>
<dbReference type="RefSeq" id="NP_001280550.1">
    <molecule id="Q8BHN3-1"/>
    <property type="nucleotide sequence ID" value="NM_001293621.2"/>
</dbReference>
<dbReference type="RefSeq" id="NP_032086.1">
    <molecule id="Q8BHN3-2"/>
    <property type="nucleotide sequence ID" value="NM_008060.3"/>
</dbReference>
<dbReference type="PDB" id="5F0E">
    <property type="method" value="X-ray"/>
    <property type="resolution" value="1.74 A"/>
    <property type="chains" value="A=33-944"/>
</dbReference>
<dbReference type="PDB" id="5H9O">
    <property type="method" value="X-ray"/>
    <property type="resolution" value="2.37 A"/>
    <property type="chains" value="A/C=33-944"/>
</dbReference>
<dbReference type="PDB" id="5HJO">
    <property type="method" value="X-ray"/>
    <property type="resolution" value="2.29 A"/>
    <property type="chains" value="A/C=33-922"/>
</dbReference>
<dbReference type="PDB" id="5HJR">
    <property type="method" value="X-ray"/>
    <property type="resolution" value="2.40 A"/>
    <property type="chains" value="A/C=33-922"/>
</dbReference>
<dbReference type="PDB" id="5IED">
    <property type="method" value="X-ray"/>
    <property type="resolution" value="1.81 A"/>
    <property type="chains" value="A=33-944"/>
</dbReference>
<dbReference type="PDB" id="5IEE">
    <property type="method" value="X-ray"/>
    <property type="resolution" value="1.92 A"/>
    <property type="chains" value="A=33-944"/>
</dbReference>
<dbReference type="PDB" id="5IEF">
    <property type="method" value="X-ray"/>
    <property type="resolution" value="2.38 A"/>
    <property type="chains" value="A=33-944"/>
</dbReference>
<dbReference type="PDB" id="5IEG">
    <property type="method" value="X-ray"/>
    <property type="resolution" value="1.82 A"/>
    <property type="chains" value="A=33-944"/>
</dbReference>
<dbReference type="PDB" id="7JTY">
    <property type="method" value="X-ray"/>
    <property type="resolution" value="2.21 A"/>
    <property type="chains" value="A/C=33-944"/>
</dbReference>
<dbReference type="PDB" id="7KAD">
    <property type="method" value="X-ray"/>
    <property type="resolution" value="2.51 A"/>
    <property type="chains" value="A/C=33-944"/>
</dbReference>
<dbReference type="PDB" id="7KB6">
    <property type="method" value="X-ray"/>
    <property type="resolution" value="2.20 A"/>
    <property type="chains" value="A/C=33-944"/>
</dbReference>
<dbReference type="PDB" id="7KB8">
    <property type="method" value="X-ray"/>
    <property type="resolution" value="2.38 A"/>
    <property type="chains" value="A/C=33-944"/>
</dbReference>
<dbReference type="PDB" id="7KBJ">
    <property type="method" value="X-ray"/>
    <property type="resolution" value="2.21 A"/>
    <property type="chains" value="A/C=348-944, G/I=33-185, H/J=222-328"/>
</dbReference>
<dbReference type="PDB" id="7KBR">
    <property type="method" value="X-ray"/>
    <property type="resolution" value="2.09 A"/>
    <property type="chains" value="A/C=348-944, G/I=33-184, H/J=222-328"/>
</dbReference>
<dbReference type="PDB" id="7KRY">
    <property type="method" value="X-ray"/>
    <property type="resolution" value="2.55 A"/>
    <property type="chains" value="A/C=33-944"/>
</dbReference>
<dbReference type="PDB" id="7L9E">
    <property type="method" value="X-ray"/>
    <property type="resolution" value="2.29 A"/>
    <property type="chains" value="A/C=348-944, E/G=33-185, F/H=222-328"/>
</dbReference>
<dbReference type="PDBsum" id="5F0E"/>
<dbReference type="PDBsum" id="5H9O"/>
<dbReference type="PDBsum" id="5HJO"/>
<dbReference type="PDBsum" id="5HJR"/>
<dbReference type="PDBsum" id="5IED"/>
<dbReference type="PDBsum" id="5IEE"/>
<dbReference type="PDBsum" id="5IEF"/>
<dbReference type="PDBsum" id="5IEG"/>
<dbReference type="PDBsum" id="7JTY"/>
<dbReference type="PDBsum" id="7KAD"/>
<dbReference type="PDBsum" id="7KB6"/>
<dbReference type="PDBsum" id="7KB8"/>
<dbReference type="PDBsum" id="7KBJ"/>
<dbReference type="PDBsum" id="7KBR"/>
<dbReference type="PDBsum" id="7KRY"/>
<dbReference type="PDBsum" id="7L9E"/>
<dbReference type="SMR" id="Q8BHN3"/>
<dbReference type="BioGRID" id="199786">
    <property type="interactions" value="18"/>
</dbReference>
<dbReference type="FunCoup" id="Q8BHN3">
    <property type="interactions" value="4155"/>
</dbReference>
<dbReference type="IntAct" id="Q8BHN3">
    <property type="interactions" value="2"/>
</dbReference>
<dbReference type="MINT" id="Q8BHN3"/>
<dbReference type="STRING" id="10090.ENSMUSP00000093965"/>
<dbReference type="CAZy" id="GH31">
    <property type="family name" value="Glycoside Hydrolase Family 31"/>
</dbReference>
<dbReference type="CarbonylDB" id="Q8BHN3"/>
<dbReference type="GlyCosmos" id="Q8BHN3">
    <property type="glycosylation" value="1 site, No reported glycans"/>
</dbReference>
<dbReference type="GlyGen" id="Q8BHN3">
    <property type="glycosylation" value="3 sites, 1 N-linked glycan (1 site), 1 O-linked glycan (1 site)"/>
</dbReference>
<dbReference type="iPTMnet" id="Q8BHN3"/>
<dbReference type="PhosphoSitePlus" id="Q8BHN3"/>
<dbReference type="SwissPalm" id="Q8BHN3"/>
<dbReference type="jPOST" id="Q8BHN3"/>
<dbReference type="PaxDb" id="10090-ENSMUSP00000093965"/>
<dbReference type="PeptideAtlas" id="Q8BHN3"/>
<dbReference type="ProteomicsDB" id="271659">
    <molecule id="Q8BHN3-1"/>
</dbReference>
<dbReference type="ProteomicsDB" id="271660">
    <molecule id="Q8BHN3-2"/>
</dbReference>
<dbReference type="ProteomicsDB" id="271661">
    <molecule id="Q8BHN3-3"/>
</dbReference>
<dbReference type="Pumba" id="Q8BHN3"/>
<dbReference type="Antibodypedia" id="14863">
    <property type="antibodies" value="195 antibodies from 29 providers"/>
</dbReference>
<dbReference type="DNASU" id="14376"/>
<dbReference type="Ensembl" id="ENSMUST00000096246.5">
    <molecule id="Q8BHN3-2"/>
    <property type="protein sequence ID" value="ENSMUSP00000093965.4"/>
    <property type="gene ID" value="ENSMUSG00000071650.7"/>
</dbReference>
<dbReference type="Ensembl" id="ENSMUST00000235274.2">
    <molecule id="Q8BHN3-1"/>
    <property type="protein sequence ID" value="ENSMUSP00000158122.2"/>
    <property type="gene ID" value="ENSMUSG00000071650.7"/>
</dbReference>
<dbReference type="GeneID" id="14376"/>
<dbReference type="KEGG" id="mmu:14376"/>
<dbReference type="UCSC" id="uc008gnx.2">
    <molecule id="Q8BHN3-1"/>
    <property type="organism name" value="mouse"/>
</dbReference>
<dbReference type="AGR" id="MGI:1097667"/>
<dbReference type="CTD" id="23193"/>
<dbReference type="MGI" id="MGI:1097667">
    <property type="gene designation" value="Ganab"/>
</dbReference>
<dbReference type="VEuPathDB" id="HostDB:ENSMUSG00000071650"/>
<dbReference type="eggNOG" id="KOG1066">
    <property type="taxonomic scope" value="Eukaryota"/>
</dbReference>
<dbReference type="GeneTree" id="ENSGT00940000159139"/>
<dbReference type="HOGENOM" id="CLU_000631_7_0_1"/>
<dbReference type="InParanoid" id="Q8BHN3"/>
<dbReference type="OMA" id="HWALGYH"/>
<dbReference type="OrthoDB" id="3237269at2759"/>
<dbReference type="PhylomeDB" id="Q8BHN3"/>
<dbReference type="TreeFam" id="TF300337"/>
<dbReference type="BRENDA" id="3.2.1.207">
    <property type="organism ID" value="3474"/>
</dbReference>
<dbReference type="UniPathway" id="UPA00957"/>
<dbReference type="BioGRID-ORCS" id="14376">
    <property type="hits" value="18 hits in 77 CRISPR screens"/>
</dbReference>
<dbReference type="ChiTaRS" id="Ganab">
    <property type="organism name" value="mouse"/>
</dbReference>
<dbReference type="PRO" id="PR:Q8BHN3"/>
<dbReference type="Proteomes" id="UP000000589">
    <property type="component" value="Chromosome 19"/>
</dbReference>
<dbReference type="RNAct" id="Q8BHN3">
    <property type="molecule type" value="protein"/>
</dbReference>
<dbReference type="Bgee" id="ENSMUSG00000071650">
    <property type="expression patterns" value="Expressed in embryonic brain and 269 other cell types or tissues"/>
</dbReference>
<dbReference type="ExpressionAtlas" id="Q8BHN3">
    <property type="expression patterns" value="baseline and differential"/>
</dbReference>
<dbReference type="GO" id="GO:0005783">
    <property type="term" value="C:endoplasmic reticulum"/>
    <property type="evidence" value="ECO:0000304"/>
    <property type="project" value="MGI"/>
</dbReference>
<dbReference type="GO" id="GO:0017177">
    <property type="term" value="C:glucosidase II complex"/>
    <property type="evidence" value="ECO:0000314"/>
    <property type="project" value="UniProtKB"/>
</dbReference>
<dbReference type="GO" id="GO:0005794">
    <property type="term" value="C:Golgi apparatus"/>
    <property type="evidence" value="ECO:0007669"/>
    <property type="project" value="UniProtKB-SubCell"/>
</dbReference>
<dbReference type="GO" id="GO:0042470">
    <property type="term" value="C:melanosome"/>
    <property type="evidence" value="ECO:0007669"/>
    <property type="project" value="UniProtKB-SubCell"/>
</dbReference>
<dbReference type="GO" id="GO:0030246">
    <property type="term" value="F:carbohydrate binding"/>
    <property type="evidence" value="ECO:0007669"/>
    <property type="project" value="InterPro"/>
</dbReference>
<dbReference type="GO" id="GO:0106407">
    <property type="term" value="F:Glc2Man9GlcNAc2 oligosaccharide glucosidase activity"/>
    <property type="evidence" value="ECO:0007669"/>
    <property type="project" value="UniProtKB-EC"/>
</dbReference>
<dbReference type="GO" id="GO:0033919">
    <property type="term" value="F:glucan 1,3-alpha-glucosidase activity"/>
    <property type="evidence" value="ECO:0000314"/>
    <property type="project" value="UniProtKB"/>
</dbReference>
<dbReference type="GO" id="GO:0015926">
    <property type="term" value="F:glucosidase activity"/>
    <property type="evidence" value="ECO:0000266"/>
    <property type="project" value="MGI"/>
</dbReference>
<dbReference type="GO" id="GO:0005975">
    <property type="term" value="P:carbohydrate metabolic process"/>
    <property type="evidence" value="ECO:0007669"/>
    <property type="project" value="InterPro"/>
</dbReference>
<dbReference type="GO" id="GO:0006491">
    <property type="term" value="P:N-glycan processing"/>
    <property type="evidence" value="ECO:0000314"/>
    <property type="project" value="UniProtKB"/>
</dbReference>
<dbReference type="CDD" id="cd06603">
    <property type="entry name" value="GH31_GANC_GANAB_alpha"/>
    <property type="match status" value="1"/>
</dbReference>
<dbReference type="CDD" id="cd14752">
    <property type="entry name" value="GH31_N"/>
    <property type="match status" value="1"/>
</dbReference>
<dbReference type="FunFam" id="3.20.20.80:FF:000046">
    <property type="entry name" value="Glucosidase alpha, neutral C"/>
    <property type="match status" value="1"/>
</dbReference>
<dbReference type="FunFam" id="3.20.20.80:FF:000039">
    <property type="entry name" value="Glucosidase, alpha neutral C"/>
    <property type="match status" value="1"/>
</dbReference>
<dbReference type="FunFam" id="2.60.40.1180:FF:000004">
    <property type="entry name" value="neutral alpha-glucosidase AB isoform X1"/>
    <property type="match status" value="1"/>
</dbReference>
<dbReference type="FunFam" id="2.60.40.1760:FF:000002">
    <property type="entry name" value="neutral alpha-glucosidase AB isoform X1"/>
    <property type="match status" value="1"/>
</dbReference>
<dbReference type="FunFam" id="2.60.40.1180:FF:000023">
    <property type="entry name" value="neutral alpha-glucosidase AB isoform X2"/>
    <property type="match status" value="1"/>
</dbReference>
<dbReference type="Gene3D" id="3.20.20.80">
    <property type="entry name" value="Glycosidases"/>
    <property type="match status" value="1"/>
</dbReference>
<dbReference type="Gene3D" id="2.60.40.1760">
    <property type="entry name" value="glycosyl hydrolase (family 31)"/>
    <property type="match status" value="1"/>
</dbReference>
<dbReference type="Gene3D" id="2.60.40.1180">
    <property type="entry name" value="Golgi alpha-mannosidase II"/>
    <property type="match status" value="2"/>
</dbReference>
<dbReference type="InterPro" id="IPR011013">
    <property type="entry name" value="Gal_mutarotase_sf_dom"/>
</dbReference>
<dbReference type="InterPro" id="IPR030458">
    <property type="entry name" value="Glyco_hydro_31_AS"/>
</dbReference>
<dbReference type="InterPro" id="IPR048395">
    <property type="entry name" value="Glyco_hydro_31_C"/>
</dbReference>
<dbReference type="InterPro" id="IPR030459">
    <property type="entry name" value="Glyco_hydro_31_CS"/>
</dbReference>
<dbReference type="InterPro" id="IPR025887">
    <property type="entry name" value="Glyco_hydro_31_N_dom"/>
</dbReference>
<dbReference type="InterPro" id="IPR000322">
    <property type="entry name" value="Glyco_hydro_31_TIM"/>
</dbReference>
<dbReference type="InterPro" id="IPR013780">
    <property type="entry name" value="Glyco_hydro_b"/>
</dbReference>
<dbReference type="InterPro" id="IPR017853">
    <property type="entry name" value="Glycoside_hydrolase_SF"/>
</dbReference>
<dbReference type="PANTHER" id="PTHR22762">
    <property type="entry name" value="ALPHA-GLUCOSIDASE"/>
    <property type="match status" value="1"/>
</dbReference>
<dbReference type="PANTHER" id="PTHR22762:SF162">
    <property type="entry name" value="NEUTRAL ALPHA-GLUCOSIDASE AB"/>
    <property type="match status" value="1"/>
</dbReference>
<dbReference type="Pfam" id="PF13802">
    <property type="entry name" value="Gal_mutarotas_2"/>
    <property type="match status" value="1"/>
</dbReference>
<dbReference type="Pfam" id="PF01055">
    <property type="entry name" value="Glyco_hydro_31_2nd"/>
    <property type="match status" value="1"/>
</dbReference>
<dbReference type="Pfam" id="PF21365">
    <property type="entry name" value="Glyco_hydro_31_3rd"/>
    <property type="match status" value="1"/>
</dbReference>
<dbReference type="SUPFAM" id="SSF51445">
    <property type="entry name" value="(Trans)glycosidases"/>
    <property type="match status" value="1"/>
</dbReference>
<dbReference type="SUPFAM" id="SSF74650">
    <property type="entry name" value="Galactose mutarotase-like"/>
    <property type="match status" value="1"/>
</dbReference>
<dbReference type="SUPFAM" id="SSF51011">
    <property type="entry name" value="Glycosyl hydrolase domain"/>
    <property type="match status" value="1"/>
</dbReference>
<dbReference type="PROSITE" id="PS00129">
    <property type="entry name" value="GLYCOSYL_HYDROL_F31_1"/>
    <property type="match status" value="1"/>
</dbReference>
<dbReference type="PROSITE" id="PS00707">
    <property type="entry name" value="GLYCOSYL_HYDROL_F31_2"/>
    <property type="match status" value="1"/>
</dbReference>
<reference key="1">
    <citation type="journal article" date="1997" name="J. Biol. Chem.">
        <title>Identification of the CD45-associated 116-kDa and 80-kDa proteins as the alpha- and beta-subunits of alpha-glucosidase II.</title>
        <authorList>
            <person name="Arendt C.W."/>
            <person name="Ostergaard H.L."/>
        </authorList>
    </citation>
    <scope>NUCLEOTIDE SEQUENCE [MRNA] (ISOFORM 2)</scope>
    <scope>PROTEIN SEQUENCE OF 33-50; 176-187; 823-839 AND 895-905</scope>
    <scope>HETERODIMERIZATION WITH PRKCSH</scope>
    <scope>INTERACTION WITH PTPRC</scope>
    <scope>SUBUNIT</scope>
    <source>
        <tissue>T-cell lymphoma</tissue>
    </source>
</reference>
<reference key="2">
    <citation type="journal article" date="2005" name="Science">
        <title>The transcriptional landscape of the mammalian genome.</title>
        <authorList>
            <person name="Carninci P."/>
            <person name="Kasukawa T."/>
            <person name="Katayama S."/>
            <person name="Gough J."/>
            <person name="Frith M.C."/>
            <person name="Maeda N."/>
            <person name="Oyama R."/>
            <person name="Ravasi T."/>
            <person name="Lenhard B."/>
            <person name="Wells C."/>
            <person name="Kodzius R."/>
            <person name="Shimokawa K."/>
            <person name="Bajic V.B."/>
            <person name="Brenner S.E."/>
            <person name="Batalov S."/>
            <person name="Forrest A.R."/>
            <person name="Zavolan M."/>
            <person name="Davis M.J."/>
            <person name="Wilming L.G."/>
            <person name="Aidinis V."/>
            <person name="Allen J.E."/>
            <person name="Ambesi-Impiombato A."/>
            <person name="Apweiler R."/>
            <person name="Aturaliya R.N."/>
            <person name="Bailey T.L."/>
            <person name="Bansal M."/>
            <person name="Baxter L."/>
            <person name="Beisel K.W."/>
            <person name="Bersano T."/>
            <person name="Bono H."/>
            <person name="Chalk A.M."/>
            <person name="Chiu K.P."/>
            <person name="Choudhary V."/>
            <person name="Christoffels A."/>
            <person name="Clutterbuck D.R."/>
            <person name="Crowe M.L."/>
            <person name="Dalla E."/>
            <person name="Dalrymple B.P."/>
            <person name="de Bono B."/>
            <person name="Della Gatta G."/>
            <person name="di Bernardo D."/>
            <person name="Down T."/>
            <person name="Engstrom P."/>
            <person name="Fagiolini M."/>
            <person name="Faulkner G."/>
            <person name="Fletcher C.F."/>
            <person name="Fukushima T."/>
            <person name="Furuno M."/>
            <person name="Futaki S."/>
            <person name="Gariboldi M."/>
            <person name="Georgii-Hemming P."/>
            <person name="Gingeras T.R."/>
            <person name="Gojobori T."/>
            <person name="Green R.E."/>
            <person name="Gustincich S."/>
            <person name="Harbers M."/>
            <person name="Hayashi Y."/>
            <person name="Hensch T.K."/>
            <person name="Hirokawa N."/>
            <person name="Hill D."/>
            <person name="Huminiecki L."/>
            <person name="Iacono M."/>
            <person name="Ikeo K."/>
            <person name="Iwama A."/>
            <person name="Ishikawa T."/>
            <person name="Jakt M."/>
            <person name="Kanapin A."/>
            <person name="Katoh M."/>
            <person name="Kawasawa Y."/>
            <person name="Kelso J."/>
            <person name="Kitamura H."/>
            <person name="Kitano H."/>
            <person name="Kollias G."/>
            <person name="Krishnan S.P."/>
            <person name="Kruger A."/>
            <person name="Kummerfeld S.K."/>
            <person name="Kurochkin I.V."/>
            <person name="Lareau L.F."/>
            <person name="Lazarevic D."/>
            <person name="Lipovich L."/>
            <person name="Liu J."/>
            <person name="Liuni S."/>
            <person name="McWilliam S."/>
            <person name="Madan Babu M."/>
            <person name="Madera M."/>
            <person name="Marchionni L."/>
            <person name="Matsuda H."/>
            <person name="Matsuzawa S."/>
            <person name="Miki H."/>
            <person name="Mignone F."/>
            <person name="Miyake S."/>
            <person name="Morris K."/>
            <person name="Mottagui-Tabar S."/>
            <person name="Mulder N."/>
            <person name="Nakano N."/>
            <person name="Nakauchi H."/>
            <person name="Ng P."/>
            <person name="Nilsson R."/>
            <person name="Nishiguchi S."/>
            <person name="Nishikawa S."/>
            <person name="Nori F."/>
            <person name="Ohara O."/>
            <person name="Okazaki Y."/>
            <person name="Orlando V."/>
            <person name="Pang K.C."/>
            <person name="Pavan W.J."/>
            <person name="Pavesi G."/>
            <person name="Pesole G."/>
            <person name="Petrovsky N."/>
            <person name="Piazza S."/>
            <person name="Reed J."/>
            <person name="Reid J.F."/>
            <person name="Ring B.Z."/>
            <person name="Ringwald M."/>
            <person name="Rost B."/>
            <person name="Ruan Y."/>
            <person name="Salzberg S.L."/>
            <person name="Sandelin A."/>
            <person name="Schneider C."/>
            <person name="Schoenbach C."/>
            <person name="Sekiguchi K."/>
            <person name="Semple C.A."/>
            <person name="Seno S."/>
            <person name="Sessa L."/>
            <person name="Sheng Y."/>
            <person name="Shibata Y."/>
            <person name="Shimada H."/>
            <person name="Shimada K."/>
            <person name="Silva D."/>
            <person name="Sinclair B."/>
            <person name="Sperling S."/>
            <person name="Stupka E."/>
            <person name="Sugiura K."/>
            <person name="Sultana R."/>
            <person name="Takenaka Y."/>
            <person name="Taki K."/>
            <person name="Tammoja K."/>
            <person name="Tan S.L."/>
            <person name="Tang S."/>
            <person name="Taylor M.S."/>
            <person name="Tegner J."/>
            <person name="Teichmann S.A."/>
            <person name="Ueda H.R."/>
            <person name="van Nimwegen E."/>
            <person name="Verardo R."/>
            <person name="Wei C.L."/>
            <person name="Yagi K."/>
            <person name="Yamanishi H."/>
            <person name="Zabarovsky E."/>
            <person name="Zhu S."/>
            <person name="Zimmer A."/>
            <person name="Hide W."/>
            <person name="Bult C."/>
            <person name="Grimmond S.M."/>
            <person name="Teasdale R.D."/>
            <person name="Liu E.T."/>
            <person name="Brusic V."/>
            <person name="Quackenbush J."/>
            <person name="Wahlestedt C."/>
            <person name="Mattick J.S."/>
            <person name="Hume D.A."/>
            <person name="Kai C."/>
            <person name="Sasaki D."/>
            <person name="Tomaru Y."/>
            <person name="Fukuda S."/>
            <person name="Kanamori-Katayama M."/>
            <person name="Suzuki M."/>
            <person name="Aoki J."/>
            <person name="Arakawa T."/>
            <person name="Iida J."/>
            <person name="Imamura K."/>
            <person name="Itoh M."/>
            <person name="Kato T."/>
            <person name="Kawaji H."/>
            <person name="Kawagashira N."/>
            <person name="Kawashima T."/>
            <person name="Kojima M."/>
            <person name="Kondo S."/>
            <person name="Konno H."/>
            <person name="Nakano K."/>
            <person name="Ninomiya N."/>
            <person name="Nishio T."/>
            <person name="Okada M."/>
            <person name="Plessy C."/>
            <person name="Shibata K."/>
            <person name="Shiraki T."/>
            <person name="Suzuki S."/>
            <person name="Tagami M."/>
            <person name="Waki K."/>
            <person name="Watahiki A."/>
            <person name="Okamura-Oho Y."/>
            <person name="Suzuki H."/>
            <person name="Kawai J."/>
            <person name="Hayashizaki Y."/>
        </authorList>
    </citation>
    <scope>NUCLEOTIDE SEQUENCE [LARGE SCALE MRNA] (ISOFORM 1)</scope>
    <source>
        <strain>C57BL/6J</strain>
        <tissue>Embryo</tissue>
        <tissue>Head</tissue>
    </source>
</reference>
<reference key="3">
    <citation type="journal article" date="2003" name="DNA Res.">
        <title>Prediction of the coding sequences of mouse homologues of KIAA gene: II. The complete nucleotide sequences of 400 mouse KIAA-homologous cDNAs identified by screening of terminal sequences of cDNA clones randomly sampled from size-fractionated libraries.</title>
        <authorList>
            <person name="Okazaki N."/>
            <person name="Kikuno R."/>
            <person name="Ohara R."/>
            <person name="Inamoto S."/>
            <person name="Aizawa H."/>
            <person name="Yuasa S."/>
            <person name="Nakajima D."/>
            <person name="Nagase T."/>
            <person name="Ohara O."/>
            <person name="Koga H."/>
        </authorList>
    </citation>
    <scope>NUCLEOTIDE SEQUENCE [LARGE SCALE MRNA] (ISOFORM 3)</scope>
    <source>
        <tissue>Brain</tissue>
    </source>
</reference>
<reference key="4">
    <citation type="journal article" date="2004" name="Genome Res.">
        <title>The status, quality, and expansion of the NIH full-length cDNA project: the Mammalian Gene Collection (MGC).</title>
        <authorList>
            <consortium name="The MGC Project Team"/>
        </authorList>
    </citation>
    <scope>NUCLEOTIDE SEQUENCE [LARGE SCALE MRNA] (ISOFORM 1)</scope>
</reference>
<reference key="5">
    <citation type="submission" date="2007-04" db="UniProtKB">
        <authorList>
            <person name="Lubec G."/>
            <person name="Kang S.U."/>
        </authorList>
    </citation>
    <scope>PROTEIN SEQUENCE OF 62-96; 134-173; 338-354; 378-400; 438-459; 591-610; 654-662; 685-698; 785-805; 864-880; 892-908 AND 915-944</scope>
    <scope>IDENTIFICATION BY MASS SPECTROMETRY</scope>
    <source>
        <strain>C57BL/6J</strain>
        <tissue>Brain</tissue>
    </source>
</reference>
<reference key="6">
    <citation type="journal article" date="2000" name="J. Biol. Chem.">
        <title>Specific isoforms of the resident endoplasmic reticulum protein glucosidase II associate with the CD45 protein-tyrosine phosphatase via a lectin-like interaction.</title>
        <authorList>
            <person name="Baldwin T.A."/>
            <person name="Gogela-Spehar M."/>
            <person name="Ostergaard H.L."/>
        </authorList>
    </citation>
    <scope>INTERACTION WITH GLYCOSYLATED PTPRC</scope>
    <scope>SUBUNIT</scope>
    <scope>GLYCOSYLATION</scope>
</reference>
<reference key="7">
    <citation type="journal article" date="2010" name="Cell">
        <title>A tissue-specific atlas of mouse protein phosphorylation and expression.</title>
        <authorList>
            <person name="Huttlin E.L."/>
            <person name="Jedrychowski M.P."/>
            <person name="Elias J.E."/>
            <person name="Goswami T."/>
            <person name="Rad R."/>
            <person name="Beausoleil S.A."/>
            <person name="Villen J."/>
            <person name="Haas W."/>
            <person name="Sowa M.E."/>
            <person name="Gygi S.P."/>
        </authorList>
    </citation>
    <scope>IDENTIFICATION BY MASS SPECTROMETRY [LARGE SCALE ANALYSIS]</scope>
    <source>
        <tissue>Brain</tissue>
        <tissue>Brown adipose tissue</tissue>
        <tissue>Heart</tissue>
        <tissue>Kidney</tissue>
        <tissue>Liver</tissue>
        <tissue>Lung</tissue>
        <tissue>Pancreas</tissue>
        <tissue>Spleen</tissue>
        <tissue>Testis</tissue>
    </source>
</reference>
<reference evidence="16 17 18 19 20 21 22 23" key="8">
    <citation type="journal article" date="2016" name="Proc. Natl. Acad. Sci. U.S.A.">
        <title>Structures of mammalian ER alpha-glucosidase II capture the binding modes of broad-spectrum iminosugar antivirals.</title>
        <authorList>
            <person name="Caputo A.T."/>
            <person name="Alonzi D.S."/>
            <person name="Marti L."/>
            <person name="Reca I.B."/>
            <person name="Kiappes J.L."/>
            <person name="Struwe W.B."/>
            <person name="Cross A."/>
            <person name="Basu S."/>
            <person name="Lowe E.D."/>
            <person name="Darlot B."/>
            <person name="Santino A."/>
            <person name="Roversi P."/>
            <person name="Zitzmann N."/>
        </authorList>
    </citation>
    <scope>X-RAY CRYSTALLOGRAPHY (1.74 ANGSTROMS) OF 33-944 IN COMPLEX WITH SUBSTRATE ANALOG AND DEOXYNOJIRIMYCIN</scope>
    <scope>FUNCTION</scope>
    <scope>CATALYTIC ACTIVITY</scope>
    <scope>PATHWAY</scope>
    <scope>BIOPHYSICOCHEMICAL PROPERTIES</scope>
    <scope>SUBUNIT</scope>
    <scope>GLYCOSYLATION AT ASN-97</scope>
    <scope>DISULFIDE BONDS</scope>
    <scope>MUTAGENESIS OF ASP-542; ASP-618 AND ARG-818</scope>
    <scope>ACTIVE SITE</scope>
</reference>
<reference key="9">
    <citation type="journal article" date="2017" name="J. Clin. Invest.">
        <title>Isolated polycystic liver disease genes define effectors of polycystin-1 function.</title>
        <authorList>
            <person name="Besse W."/>
            <person name="Dong K."/>
            <person name="Choi J."/>
            <person name="Punia S."/>
            <person name="Fedeles S.V."/>
            <person name="Choi M."/>
            <person name="Gallagher A.R."/>
            <person name="Huang E.B."/>
            <person name="Gulati A."/>
            <person name="Knight J."/>
            <person name="Mane S."/>
            <person name="Tahvanainen E."/>
            <person name="Tahvanainen P."/>
            <person name="Sanna-Cherchi S."/>
            <person name="Lifton R.P."/>
            <person name="Watnick T."/>
            <person name="Pei Y.P."/>
            <person name="Torres V.E."/>
            <person name="Somlo S."/>
        </authorList>
    </citation>
    <scope>FUNCTION</scope>
</reference>
<sequence length="944" mass="106911">MAAIAAVAARRRRSWLSLVLAYLGVCLGITLAVDRSNFKTCDESSFCKRQRSIRPGLSPYRALLDTLQLGPDALTVHLIHEVTKVLLVLELQGLQKNMTRIRIDELEPRRPRYRVPDVLVADPPTARLSVSGRDDNSVELTVAEGPYKIILTAQPFRLDLLEDRSLLLSVNARGLMAFEHQRAPRVPQESKDPAEGNGAQPEATPGDGDKPEETQEKAEKDEPGAWEETFKTHSDSKPYGPTSVGLDFSLPGMEHVYGIPEHADSLRLKVTEGGEPYRLYNLDVFQYELNNPMALYGSVPVLLAHSFHRDLGIFWLNAAETWVDISSNTAGKTLFGKMLDYLQGSGETPQTDIRWMSESGIIDVFLMLGPSVFDVFRQYASLTGTQALPPLFSLGYHQSRWNYRDEADVLEVDQGFDDHNMPCDVIWLDIEHADGKRYFTWDPTRFPQPLNMLEHLASKRRKLVAIVDPHIKVDSGYRVHEELRNHGLYVKTRDGSDYEGWCWPGSASYPDFTNPRMRAWWSNMFSFDNYEGSAPNLYVWNDMNEPSVFNGPEVTMLKDAVHYGGWEHRDIHNIYGLYVHMATADGLIQRSGGIERPFVLSRAFFSGSQRFGAVWTGDNTAEWDHLKISIPMCLSLALVGLSFCGADVGGFFKNPEPELLVRWYQMGAYQPFFRAHAHLDTGRREPWLLASQYQDAIRDALFQRYSLLPFWYTLFYQAHKEGFPVMRPLWVQYPEDMSTFSIEDQFMLGDALLIHPVSDAGAHGVQVYLPGQEEVWYDIQSYQKHHGPQTLYLPVTLSSIPVFQRGGTIVPRWMRVRRSSDCMKDDPITLFVALSPQGTAQGELFLDDGHTFNYQTRHEFLLRRFSFSGSTLVSSSADPKGHLETPIWIERVVIMGAGKPAAVVLQTKGSPESRLSFQHDPETSVLILRKPGVSVASDWSIHLR</sequence>
<organism>
    <name type="scientific">Mus musculus</name>
    <name type="common">Mouse</name>
    <dbReference type="NCBI Taxonomy" id="10090"/>
    <lineage>
        <taxon>Eukaryota</taxon>
        <taxon>Metazoa</taxon>
        <taxon>Chordata</taxon>
        <taxon>Craniata</taxon>
        <taxon>Vertebrata</taxon>
        <taxon>Euteleostomi</taxon>
        <taxon>Mammalia</taxon>
        <taxon>Eutheria</taxon>
        <taxon>Euarchontoglires</taxon>
        <taxon>Glires</taxon>
        <taxon>Rodentia</taxon>
        <taxon>Myomorpha</taxon>
        <taxon>Muroidea</taxon>
        <taxon>Muridae</taxon>
        <taxon>Murinae</taxon>
        <taxon>Mus</taxon>
        <taxon>Mus</taxon>
    </lineage>
</organism>
<evidence type="ECO:0000250" key="1">
    <source>
        <dbReference type="UniProtKB" id="P79403"/>
    </source>
</evidence>
<evidence type="ECO:0000250" key="2">
    <source>
        <dbReference type="UniProtKB" id="Q14697"/>
    </source>
</evidence>
<evidence type="ECO:0000255" key="3">
    <source>
        <dbReference type="PROSITE-ProRule" id="PRU10066"/>
    </source>
</evidence>
<evidence type="ECO:0000256" key="4">
    <source>
        <dbReference type="SAM" id="MobiDB-lite"/>
    </source>
</evidence>
<evidence type="ECO:0000269" key="5">
    <source>
    </source>
</evidence>
<evidence type="ECO:0000269" key="6">
    <source>
    </source>
</evidence>
<evidence type="ECO:0000269" key="7">
    <source>
    </source>
</evidence>
<evidence type="ECO:0000269" key="8">
    <source>
    </source>
</evidence>
<evidence type="ECO:0000303" key="9">
    <source>
    </source>
</evidence>
<evidence type="ECO:0000303" key="10">
    <source>
    </source>
</evidence>
<evidence type="ECO:0000303" key="11">
    <source>
    </source>
</evidence>
<evidence type="ECO:0000303" key="12">
    <source>
    </source>
</evidence>
<evidence type="ECO:0000305" key="13"/>
<evidence type="ECO:0000305" key="14">
    <source>
    </source>
</evidence>
<evidence type="ECO:0000312" key="15">
    <source>
        <dbReference type="MGI" id="MGI:1097667"/>
    </source>
</evidence>
<evidence type="ECO:0007744" key="16">
    <source>
        <dbReference type="PDB" id="5F0E"/>
    </source>
</evidence>
<evidence type="ECO:0007744" key="17">
    <source>
        <dbReference type="PDB" id="5H9O"/>
    </source>
</evidence>
<evidence type="ECO:0007744" key="18">
    <source>
        <dbReference type="PDB" id="5HJO"/>
    </source>
</evidence>
<evidence type="ECO:0007744" key="19">
    <source>
        <dbReference type="PDB" id="5HJR"/>
    </source>
</evidence>
<evidence type="ECO:0007744" key="20">
    <source>
        <dbReference type="PDB" id="5IED"/>
    </source>
</evidence>
<evidence type="ECO:0007744" key="21">
    <source>
        <dbReference type="PDB" id="5IEE"/>
    </source>
</evidence>
<evidence type="ECO:0007744" key="22">
    <source>
        <dbReference type="PDB" id="5IEF"/>
    </source>
</evidence>
<evidence type="ECO:0007744" key="23">
    <source>
        <dbReference type="PDB" id="5IEG"/>
    </source>
</evidence>
<evidence type="ECO:0007829" key="24">
    <source>
        <dbReference type="PDB" id="5F0E"/>
    </source>
</evidence>
<evidence type="ECO:0007829" key="25">
    <source>
        <dbReference type="PDB" id="7KBR"/>
    </source>
</evidence>
<proteinExistence type="evidence at protein level"/>
<accession>Q8BHN3</accession>
<accession>O08794</accession>
<accession>Q149A6</accession>
<accession>Q80U81</accession>
<accession>Q9CS53</accession>
<comment type="function">
    <text evidence="6 7">Catalytic subunit of glucosidase II that cleaves sequentially the 2 innermost alpha-1,3-linked glucose residues from the Glc(2)Man(9)GlcNAc(2) oligosaccharide precursor of immature glycoproteins (PubMed:27462106). Required for PKD1/Polycystin-1 and PKD2/Polycystin-2 maturation and localization to the cell surface and cilia (PubMed:28375157).</text>
</comment>
<comment type="catalytic activity">
    <reaction evidence="6">
        <text>N(4)-(alpha-D-Glc-(1-&gt;3)-alpha-D-Man-(1-&gt;2)-alpha-D-Man-(1-&gt;2)-alpha-D-Man-(1-&gt;3)-[alpha-D-Man-(1-&gt;2)-alpha-D-Man-(1-&gt;3)-[alpha-D-Man-(1-&gt;2)-alpha-D-Man-(1-&gt;6)]-alpha-D-Man-(1-&gt;6)]-beta-D-Man-(1-&gt;4)-beta-D-GlcNAc-(1-&gt;4)-beta-D-GlcNAc)-L-asparaginyl-[protein] + H2O = N(4)-(alpha-D-Man-(1-&gt;2)-alpha-D-Man-(1-&gt;2)-alpha-D-Man-(1-&gt;3)-[alpha-D-Man-(1-&gt;2)-alpha-D-Man-(1-&gt;3)-[alpha-D-Man-(1-&gt;2)-alpha-D-Man-(1-&gt;6)]-alpha-D-Man-(1-&gt;6)]-beta-D-Man-(1-&gt;4)-beta-D-GlcNAc-(1-&gt;4)-beta-D-GlcNAc)-L-asparaginyl-[protein] (N-glucan mannose isomer 9A1,2,3B1,2,3) + beta-D-glucose</text>
        <dbReference type="Rhea" id="RHEA:56000"/>
        <dbReference type="Rhea" id="RHEA-COMP:14356"/>
        <dbReference type="Rhea" id="RHEA-COMP:14357"/>
        <dbReference type="ChEBI" id="CHEBI:15377"/>
        <dbReference type="ChEBI" id="CHEBI:15903"/>
        <dbReference type="ChEBI" id="CHEBI:59080"/>
        <dbReference type="ChEBI" id="CHEBI:139493"/>
        <dbReference type="EC" id="3.2.1.207"/>
    </reaction>
</comment>
<comment type="catalytic activity">
    <reaction evidence="6">
        <text>N(4)-(alpha-D-Glc-(1-&gt;3)-alpha-D-Glc-(1-&gt;3)-alpha-D-Man-(1-&gt;2)-alpha-D-Man-(1-&gt;2)-alpha-D-Man-(1-&gt;3)-[alpha-D-Man-(1-&gt;2)-alpha-D-Man-(1-&gt;3)-[alpha-D-Man-(1-&gt;2)-alpha-D-Man-(1-&gt;6)]-alpha-D-Man-(1-&gt;6)]-beta-D-Man-(1-&gt;4)-beta-D-GlcNAc-(1-&gt;4)-beta-D-GlcNAc)-L-asparaginyl-[protein] + H2O = N(4)-(alpha-D-Glc-(1-&gt;3)-alpha-D-Man-(1-&gt;2)-alpha-D-Man-(1-&gt;2)-alpha-D-Man-(1-&gt;3)-[alpha-D-Man-(1-&gt;2)-alpha-D-Man-(1-&gt;3)-[alpha-D-Man-(1-&gt;2)-alpha-D-Man-(1-&gt;6)]-alpha-D-Man-(1-&gt;6)]-beta-D-Man-(1-&gt;4)-beta-D-GlcNAc-(1-&gt;4)-beta-D-GlcNAc)-L-asparaginyl-[protein] + beta-D-glucose</text>
        <dbReference type="Rhea" id="RHEA:55996"/>
        <dbReference type="Rhea" id="RHEA-COMP:14355"/>
        <dbReference type="Rhea" id="RHEA-COMP:14357"/>
        <dbReference type="ChEBI" id="CHEBI:15377"/>
        <dbReference type="ChEBI" id="CHEBI:15903"/>
        <dbReference type="ChEBI" id="CHEBI:59080"/>
        <dbReference type="ChEBI" id="CHEBI:59082"/>
        <dbReference type="EC" id="3.2.1.207"/>
    </reaction>
</comment>
<comment type="biophysicochemical properties">
    <phDependence>
        <text>Optimum pH is 6.5 - 7.</text>
    </phDependence>
</comment>
<comment type="pathway">
    <text evidence="6">Glycan metabolism; N-glycan metabolism.</text>
</comment>
<comment type="subunit">
    <text evidence="5 6 8">Heterodimer of a catalytic alpha subunit (GANAB) and a beta subunit (PRKCSH) (PubMed:10921916, PubMed:27462106, PubMed:9148925). Binds glycosylated PTPRC (PubMed:10921916, PubMed:9148925).</text>
</comment>
<comment type="subcellular location">
    <subcellularLocation>
        <location evidence="2">Endoplasmic reticulum</location>
    </subcellularLocation>
    <subcellularLocation>
        <location evidence="1">Golgi apparatus</location>
    </subcellularLocation>
    <subcellularLocation>
        <location evidence="2">Melanosome</location>
    </subcellularLocation>
</comment>
<comment type="alternative products">
    <event type="alternative splicing"/>
    <isoform>
        <id>Q8BHN3-1</id>
        <name>1</name>
        <sequence type="displayed"/>
    </isoform>
    <isoform>
        <id>Q8BHN3-2</id>
        <name>2</name>
        <sequence type="described" ref="VSP_010676"/>
    </isoform>
    <isoform>
        <id>Q8BHN3-3</id>
        <name>3</name>
        <sequence type="described" ref="VSP_010675"/>
    </isoform>
</comment>
<comment type="miscellaneous">
    <molecule>Isoform 3</molecule>
    <text evidence="13">May be due to an intron retention.</text>
</comment>
<comment type="similarity">
    <text evidence="13">Belongs to the glycosyl hydrolase 31 family.</text>
</comment>
<comment type="sequence caution" evidence="13">
    <conflict type="erroneous initiation">
        <sequence resource="EMBL-CDS" id="BAC65483"/>
    </conflict>
</comment>
<protein>
    <recommendedName>
        <fullName>Neutral alpha-glucosidase AB</fullName>
        <ecNumber evidence="6">3.2.1.207</ecNumber>
    </recommendedName>
    <alternativeName>
        <fullName>Alpha-glucosidase 2</fullName>
    </alternativeName>
    <alternativeName>
        <fullName evidence="10">Glucosidase II subunit alpha</fullName>
    </alternativeName>
</protein>
<keyword id="KW-0002">3D-structure</keyword>
<keyword id="KW-0025">Alternative splicing</keyword>
<keyword id="KW-0903">Direct protein sequencing</keyword>
<keyword id="KW-1015">Disulfide bond</keyword>
<keyword id="KW-0256">Endoplasmic reticulum</keyword>
<keyword id="KW-0325">Glycoprotein</keyword>
<keyword id="KW-0326">Glycosidase</keyword>
<keyword id="KW-0333">Golgi apparatus</keyword>
<keyword id="KW-0378">Hydrolase</keyword>
<keyword id="KW-0597">Phosphoprotein</keyword>
<keyword id="KW-1185">Reference proteome</keyword>
<keyword id="KW-0732">Signal</keyword>
<name>GANAB_MOUSE</name>
<feature type="signal peptide" evidence="8">
    <location>
        <begin position="1"/>
        <end position="32"/>
    </location>
</feature>
<feature type="chain" id="PRO_0000018572" description="Neutral alpha-glucosidase AB">
    <location>
        <begin position="33"/>
        <end position="944"/>
    </location>
</feature>
<feature type="region of interest" description="Disordered" evidence="4">
    <location>
        <begin position="180"/>
        <end position="238"/>
    </location>
</feature>
<feature type="compositionally biased region" description="Basic and acidic residues" evidence="4">
    <location>
        <begin position="207"/>
        <end position="236"/>
    </location>
</feature>
<feature type="active site" description="Nucleophile" evidence="3 6 19">
    <location>
        <position position="542"/>
    </location>
</feature>
<feature type="active site" description="Proton donor" evidence="6">
    <location>
        <position position="618"/>
    </location>
</feature>
<feature type="binding site" evidence="14 18">
    <location>
        <position position="283"/>
    </location>
    <ligand>
        <name>substrate</name>
    </ligand>
</feature>
<feature type="binding site" evidence="14 18">
    <location>
        <position position="429"/>
    </location>
    <ligand>
        <name>substrate</name>
    </ligand>
</feature>
<feature type="binding site" evidence="14 18">
    <location>
        <position position="602"/>
    </location>
    <ligand>
        <name>substrate</name>
    </ligand>
</feature>
<feature type="binding site" evidence="14 18">
    <location>
        <position position="676"/>
    </location>
    <ligand>
        <name>substrate</name>
    </ligand>
</feature>
<feature type="modified residue" description="Phosphoserine" evidence="2">
    <location>
        <position position="52"/>
    </location>
</feature>
<feature type="glycosylation site" description="N-linked (GlcNAc...) asparagine" evidence="5 6 16 18 19 20 21 22 23">
    <location>
        <position position="97"/>
    </location>
</feature>
<feature type="disulfide bond" evidence="6 16 17 18 19 20 21 22 23">
    <location>
        <begin position="41"/>
        <end position="47"/>
    </location>
</feature>
<feature type="disulfide bond" evidence="6 16 17 18 19 20 21 22 23">
    <location>
        <begin position="633"/>
        <end position="644"/>
    </location>
</feature>
<feature type="splice variant" id="VSP_010675" description="In isoform 3." evidence="9">
    <location>
        <begin position="1"/>
        <end position="252"/>
    </location>
</feature>
<feature type="splice variant" id="VSP_010676" description="In isoform 2." evidence="12">
    <original>P</original>
    <variation>PFSDKVSLALGSVWDKIKNLFSR</variation>
    <location>
        <position position="187"/>
    </location>
</feature>
<feature type="mutagenesis site" description="Loss of enzyme activity." evidence="6">
    <original>D</original>
    <variation>E</variation>
    <variation>N</variation>
    <location>
        <position position="542"/>
    </location>
</feature>
<feature type="mutagenesis site" description="Loss of enzyme activity." evidence="6">
    <original>D</original>
    <variation>N</variation>
    <location>
        <position position="618"/>
    </location>
</feature>
<feature type="mutagenesis site" description="Disrupts interaction with PRKCSH. Nearly abolishes enzyme activity." evidence="6">
    <original>R</original>
    <variation>E</variation>
    <location>
        <position position="818"/>
    </location>
</feature>
<feature type="sequence conflict" description="In Ref. 2; BAB30982." evidence="13" ref="2">
    <original>D</original>
    <variation>N</variation>
    <location>
        <position position="647"/>
    </location>
</feature>
<feature type="helix" evidence="24">
    <location>
        <begin position="35"/>
        <end position="37"/>
    </location>
</feature>
<feature type="helix" evidence="24">
    <location>
        <begin position="41"/>
        <end position="43"/>
    </location>
</feature>
<feature type="helix" evidence="24">
    <location>
        <begin position="45"/>
        <end position="51"/>
    </location>
</feature>
<feature type="strand" evidence="24">
    <location>
        <begin position="59"/>
        <end position="69"/>
    </location>
</feature>
<feature type="strand" evidence="24">
    <location>
        <begin position="74"/>
        <end position="80"/>
    </location>
</feature>
<feature type="turn" evidence="24">
    <location>
        <begin position="81"/>
        <end position="83"/>
    </location>
</feature>
<feature type="strand" evidence="24">
    <location>
        <begin position="86"/>
        <end position="94"/>
    </location>
</feature>
<feature type="turn" evidence="24">
    <location>
        <begin position="95"/>
        <end position="97"/>
    </location>
</feature>
<feature type="strand" evidence="24">
    <location>
        <begin position="98"/>
        <end position="107"/>
    </location>
</feature>
<feature type="strand" evidence="24">
    <location>
        <begin position="117"/>
        <end position="121"/>
    </location>
</feature>
<feature type="strand" evidence="24">
    <location>
        <begin position="128"/>
        <end position="133"/>
    </location>
</feature>
<feature type="strand" evidence="24">
    <location>
        <begin position="135"/>
        <end position="142"/>
    </location>
</feature>
<feature type="strand" evidence="24">
    <location>
        <begin position="145"/>
        <end position="152"/>
    </location>
</feature>
<feature type="turn" evidence="24">
    <location>
        <begin position="153"/>
        <end position="156"/>
    </location>
</feature>
<feature type="strand" evidence="24">
    <location>
        <begin position="157"/>
        <end position="162"/>
    </location>
</feature>
<feature type="strand" evidence="24">
    <location>
        <begin position="165"/>
        <end position="171"/>
    </location>
</feature>
<feature type="strand" evidence="24">
    <location>
        <begin position="225"/>
        <end position="230"/>
    </location>
</feature>
<feature type="strand" evidence="24">
    <location>
        <begin position="233"/>
        <end position="235"/>
    </location>
</feature>
<feature type="strand" evidence="24">
    <location>
        <begin position="244"/>
        <end position="251"/>
    </location>
</feature>
<feature type="strand" evidence="24">
    <location>
        <begin position="255"/>
        <end position="258"/>
    </location>
</feature>
<feature type="strand" evidence="24">
    <location>
        <begin position="277"/>
        <end position="279"/>
    </location>
</feature>
<feature type="strand" evidence="24">
    <location>
        <begin position="289"/>
        <end position="291"/>
    </location>
</feature>
<feature type="strand" evidence="24">
    <location>
        <begin position="301"/>
        <end position="305"/>
    </location>
</feature>
<feature type="strand" evidence="24">
    <location>
        <begin position="310"/>
        <end position="315"/>
    </location>
</feature>
<feature type="strand" evidence="24">
    <location>
        <begin position="321"/>
        <end position="328"/>
    </location>
</feature>
<feature type="strand" evidence="24">
    <location>
        <begin position="350"/>
        <end position="360"/>
    </location>
</feature>
<feature type="strand" evidence="24">
    <location>
        <begin position="362"/>
        <end position="367"/>
    </location>
</feature>
<feature type="helix" evidence="24">
    <location>
        <begin position="372"/>
        <end position="383"/>
    </location>
</feature>
<feature type="helix" evidence="24">
    <location>
        <begin position="391"/>
        <end position="394"/>
    </location>
</feature>
<feature type="strand" evidence="24">
    <location>
        <begin position="395"/>
        <end position="398"/>
    </location>
</feature>
<feature type="helix" evidence="24">
    <location>
        <begin position="406"/>
        <end position="418"/>
    </location>
</feature>
<feature type="strand" evidence="24">
    <location>
        <begin position="424"/>
        <end position="428"/>
    </location>
</feature>
<feature type="helix" evidence="24">
    <location>
        <begin position="430"/>
        <end position="432"/>
    </location>
</feature>
<feature type="turn" evidence="24">
    <location>
        <begin position="443"/>
        <end position="445"/>
    </location>
</feature>
<feature type="helix" evidence="24">
    <location>
        <begin position="449"/>
        <end position="458"/>
    </location>
</feature>
<feature type="strand" evidence="24">
    <location>
        <begin position="462"/>
        <end position="466"/>
    </location>
</feature>
<feature type="helix" evidence="24">
    <location>
        <begin position="478"/>
        <end position="485"/>
    </location>
</feature>
<feature type="strand" evidence="24">
    <location>
        <begin position="495"/>
        <end position="497"/>
    </location>
</feature>
<feature type="strand" evidence="24">
    <location>
        <begin position="500"/>
        <end position="502"/>
    </location>
</feature>
<feature type="strand" evidence="24">
    <location>
        <begin position="505"/>
        <end position="508"/>
    </location>
</feature>
<feature type="helix" evidence="24">
    <location>
        <begin position="515"/>
        <end position="524"/>
    </location>
</feature>
<feature type="turn" evidence="24">
    <location>
        <begin position="527"/>
        <end position="529"/>
    </location>
</feature>
<feature type="strand" evidence="24">
    <location>
        <begin position="537"/>
        <end position="541"/>
    </location>
</feature>
<feature type="turn" evidence="24">
    <location>
        <begin position="544"/>
        <end position="546"/>
    </location>
</feature>
<feature type="helix" evidence="24">
    <location>
        <begin position="552"/>
        <end position="554"/>
    </location>
</feature>
<feature type="helix" evidence="24">
    <location>
        <begin position="563"/>
        <end position="565"/>
    </location>
</feature>
<feature type="helix" evidence="24">
    <location>
        <begin position="568"/>
        <end position="571"/>
    </location>
</feature>
<feature type="helix" evidence="24">
    <location>
        <begin position="572"/>
        <end position="574"/>
    </location>
</feature>
<feature type="helix" evidence="24">
    <location>
        <begin position="575"/>
        <end position="589"/>
    </location>
</feature>
<feature type="turn" evidence="24">
    <location>
        <begin position="590"/>
        <end position="592"/>
    </location>
</feature>
<feature type="strand" evidence="24">
    <location>
        <begin position="599"/>
        <end position="603"/>
    </location>
</feature>
<feature type="helix" evidence="24">
    <location>
        <begin position="608"/>
        <end position="611"/>
    </location>
</feature>
<feature type="strand" evidence="24">
    <location>
        <begin position="613"/>
        <end position="615"/>
    </location>
</feature>
<feature type="strand" evidence="24">
    <location>
        <begin position="620"/>
        <end position="622"/>
    </location>
</feature>
<feature type="helix" evidence="24">
    <location>
        <begin position="623"/>
        <end position="638"/>
    </location>
</feature>
<feature type="strand" evidence="24">
    <location>
        <begin position="643"/>
        <end position="645"/>
    </location>
</feature>
<feature type="strand" evidence="24">
    <location>
        <begin position="651"/>
        <end position="653"/>
    </location>
</feature>
<feature type="helix" evidence="24">
    <location>
        <begin position="657"/>
        <end position="667"/>
    </location>
</feature>
<feature type="strand" evidence="24">
    <location>
        <begin position="670"/>
        <end position="675"/>
    </location>
</feature>
<feature type="helix" evidence="24">
    <location>
        <begin position="686"/>
        <end position="688"/>
    </location>
</feature>
<feature type="helix" evidence="24">
    <location>
        <begin position="691"/>
        <end position="706"/>
    </location>
</feature>
<feature type="helix" evidence="24">
    <location>
        <begin position="708"/>
        <end position="721"/>
    </location>
</feature>
<feature type="strand" evidence="24">
    <location>
        <begin position="725"/>
        <end position="727"/>
    </location>
</feature>
<feature type="helix" evidence="24">
    <location>
        <begin position="729"/>
        <end position="732"/>
    </location>
</feature>
<feature type="helix" evidence="24">
    <location>
        <begin position="737"/>
        <end position="739"/>
    </location>
</feature>
<feature type="strand" evidence="24">
    <location>
        <begin position="746"/>
        <end position="748"/>
    </location>
</feature>
<feature type="turn" evidence="24">
    <location>
        <begin position="749"/>
        <end position="751"/>
    </location>
</feature>
<feature type="strand" evidence="24">
    <location>
        <begin position="752"/>
        <end position="754"/>
    </location>
</feature>
<feature type="strand" evidence="24">
    <location>
        <begin position="764"/>
        <end position="769"/>
    </location>
</feature>
<feature type="strand" evidence="24">
    <location>
        <begin position="775"/>
        <end position="778"/>
    </location>
</feature>
<feature type="turn" evidence="24">
    <location>
        <begin position="779"/>
        <end position="781"/>
    </location>
</feature>
<feature type="strand" evidence="24">
    <location>
        <begin position="784"/>
        <end position="794"/>
    </location>
</feature>
<feature type="strand" evidence="24">
    <location>
        <begin position="802"/>
        <end position="805"/>
    </location>
</feature>
<feature type="strand" evidence="24">
    <location>
        <begin position="808"/>
        <end position="812"/>
    </location>
</feature>
<feature type="helix" evidence="24">
    <location>
        <begin position="820"/>
        <end position="823"/>
    </location>
</feature>
<feature type="strand" evidence="24">
    <location>
        <begin position="828"/>
        <end position="833"/>
    </location>
</feature>
<feature type="strand" evidence="24">
    <location>
        <begin position="840"/>
        <end position="846"/>
    </location>
</feature>
<feature type="strand" evidence="24">
    <location>
        <begin position="849"/>
        <end position="851"/>
    </location>
</feature>
<feature type="helix" evidence="24">
    <location>
        <begin position="853"/>
        <end position="856"/>
    </location>
</feature>
<feature type="strand" evidence="24">
    <location>
        <begin position="861"/>
        <end position="868"/>
    </location>
</feature>
<feature type="strand" evidence="24">
    <location>
        <begin position="871"/>
        <end position="877"/>
    </location>
</feature>
<feature type="strand" evidence="24">
    <location>
        <begin position="888"/>
        <end position="895"/>
    </location>
</feature>
<feature type="strand" evidence="24">
    <location>
        <begin position="901"/>
        <end position="907"/>
    </location>
</feature>
<feature type="strand" evidence="25">
    <location>
        <begin position="913"/>
        <end position="915"/>
    </location>
</feature>
<feature type="strand" evidence="24">
    <location>
        <begin position="917"/>
        <end position="920"/>
    </location>
</feature>
<feature type="turn" evidence="24">
    <location>
        <begin position="921"/>
        <end position="924"/>
    </location>
</feature>
<feature type="strand" evidence="24">
    <location>
        <begin position="925"/>
        <end position="929"/>
    </location>
</feature>
<feature type="strand" evidence="24">
    <location>
        <begin position="939"/>
        <end position="944"/>
    </location>
</feature>